<dbReference type="EMBL" id="AE001363">
    <property type="protein sequence ID" value="AAD18467.1"/>
    <property type="molecule type" value="Genomic_DNA"/>
</dbReference>
<dbReference type="EMBL" id="AE002161">
    <property type="protein sequence ID" value="AAF73669.1"/>
    <property type="status" value="ALT_INIT"/>
    <property type="molecule type" value="Genomic_DNA"/>
</dbReference>
<dbReference type="EMBL" id="BA000008">
    <property type="protein sequence ID" value="BAA98528.1"/>
    <property type="molecule type" value="Genomic_DNA"/>
</dbReference>
<dbReference type="EMBL" id="AE009440">
    <property type="protein sequence ID" value="AAP98261.1"/>
    <property type="molecule type" value="Genomic_DNA"/>
</dbReference>
<dbReference type="PIR" id="F86530">
    <property type="entry name" value="F86530"/>
</dbReference>
<dbReference type="PIR" id="G72093">
    <property type="entry name" value="G72093"/>
</dbReference>
<dbReference type="RefSeq" id="NP_224523.1">
    <property type="nucleotide sequence ID" value="NC_000922.1"/>
</dbReference>
<dbReference type="RefSeq" id="WP_010882966.1">
    <property type="nucleotide sequence ID" value="NZ_LN847257.1"/>
</dbReference>
<dbReference type="SMR" id="Q9Z8M0"/>
<dbReference type="STRING" id="406984.CPK_ORF00826"/>
<dbReference type="GeneID" id="45050367"/>
<dbReference type="KEGG" id="cpa:CP_0439"/>
<dbReference type="KEGG" id="cpj:rbfA"/>
<dbReference type="KEGG" id="cpn:CPn_0318"/>
<dbReference type="KEGG" id="cpt:CpB0328"/>
<dbReference type="PATRIC" id="fig|115713.3.peg.352"/>
<dbReference type="eggNOG" id="COG0858">
    <property type="taxonomic scope" value="Bacteria"/>
</dbReference>
<dbReference type="HOGENOM" id="CLU_089475_6_3_0"/>
<dbReference type="OMA" id="QHAKIFV"/>
<dbReference type="OrthoDB" id="21494at2"/>
<dbReference type="Proteomes" id="UP000000583">
    <property type="component" value="Chromosome"/>
</dbReference>
<dbReference type="Proteomes" id="UP000000801">
    <property type="component" value="Chromosome"/>
</dbReference>
<dbReference type="GO" id="GO:0005829">
    <property type="term" value="C:cytosol"/>
    <property type="evidence" value="ECO:0007669"/>
    <property type="project" value="TreeGrafter"/>
</dbReference>
<dbReference type="GO" id="GO:0043024">
    <property type="term" value="F:ribosomal small subunit binding"/>
    <property type="evidence" value="ECO:0007669"/>
    <property type="project" value="TreeGrafter"/>
</dbReference>
<dbReference type="GO" id="GO:0030490">
    <property type="term" value="P:maturation of SSU-rRNA"/>
    <property type="evidence" value="ECO:0007669"/>
    <property type="project" value="UniProtKB-UniRule"/>
</dbReference>
<dbReference type="Gene3D" id="3.30.300.20">
    <property type="match status" value="1"/>
</dbReference>
<dbReference type="HAMAP" id="MF_00003">
    <property type="entry name" value="RbfA"/>
    <property type="match status" value="1"/>
</dbReference>
<dbReference type="InterPro" id="IPR015946">
    <property type="entry name" value="KH_dom-like_a/b"/>
</dbReference>
<dbReference type="InterPro" id="IPR000238">
    <property type="entry name" value="RbfA"/>
</dbReference>
<dbReference type="InterPro" id="IPR023799">
    <property type="entry name" value="RbfA_dom_sf"/>
</dbReference>
<dbReference type="InterPro" id="IPR020053">
    <property type="entry name" value="Ribosome-bd_factorA_CS"/>
</dbReference>
<dbReference type="NCBIfam" id="TIGR00082">
    <property type="entry name" value="rbfA"/>
    <property type="match status" value="1"/>
</dbReference>
<dbReference type="PANTHER" id="PTHR33515">
    <property type="entry name" value="RIBOSOME-BINDING FACTOR A, CHLOROPLASTIC-RELATED"/>
    <property type="match status" value="1"/>
</dbReference>
<dbReference type="PANTHER" id="PTHR33515:SF1">
    <property type="entry name" value="RIBOSOME-BINDING FACTOR A, CHLOROPLASTIC-RELATED"/>
    <property type="match status" value="1"/>
</dbReference>
<dbReference type="Pfam" id="PF02033">
    <property type="entry name" value="RBFA"/>
    <property type="match status" value="1"/>
</dbReference>
<dbReference type="SUPFAM" id="SSF89919">
    <property type="entry name" value="Ribosome-binding factor A, RbfA"/>
    <property type="match status" value="1"/>
</dbReference>
<dbReference type="PROSITE" id="PS01319">
    <property type="entry name" value="RBFA"/>
    <property type="match status" value="1"/>
</dbReference>
<comment type="function">
    <text evidence="1">One of several proteins that assist in the late maturation steps of the functional core of the 30S ribosomal subunit. Associates with free 30S ribosomal subunits (but not with 30S subunits that are part of 70S ribosomes or polysomes). Required for efficient processing of 16S rRNA. May interact with the 5'-terminal helix region of 16S rRNA.</text>
</comment>
<comment type="subunit">
    <text evidence="1">Monomer. Binds 30S ribosomal subunits, but not 50S ribosomal subunits or 70S ribosomes.</text>
</comment>
<comment type="subcellular location">
    <subcellularLocation>
        <location evidence="1">Cytoplasm</location>
    </subcellularLocation>
</comment>
<comment type="similarity">
    <text evidence="1">Belongs to the RbfA family.</text>
</comment>
<comment type="sequence caution" evidence="2">
    <conflict type="erroneous initiation">
        <sequence resource="EMBL-CDS" id="AAF73669"/>
    </conflict>
    <text>Extended N-terminus.</text>
</comment>
<gene>
    <name evidence="1" type="primary">rbfA</name>
    <name type="ordered locus">CPn_0318</name>
    <name type="ordered locus">CP_0439</name>
    <name type="ordered locus">CpB0328</name>
</gene>
<reference key="1">
    <citation type="journal article" date="1999" name="Nat. Genet.">
        <title>Comparative genomes of Chlamydia pneumoniae and C. trachomatis.</title>
        <authorList>
            <person name="Kalman S."/>
            <person name="Mitchell W.P."/>
            <person name="Marathe R."/>
            <person name="Lammel C.J."/>
            <person name="Fan J."/>
            <person name="Hyman R.W."/>
            <person name="Olinger L."/>
            <person name="Grimwood J."/>
            <person name="Davis R.W."/>
            <person name="Stephens R.S."/>
        </authorList>
    </citation>
    <scope>NUCLEOTIDE SEQUENCE [LARGE SCALE GENOMIC DNA]</scope>
    <source>
        <strain>CWL029</strain>
    </source>
</reference>
<reference key="2">
    <citation type="journal article" date="2000" name="Nucleic Acids Res.">
        <title>Genome sequences of Chlamydia trachomatis MoPn and Chlamydia pneumoniae AR39.</title>
        <authorList>
            <person name="Read T.D."/>
            <person name="Brunham R.C."/>
            <person name="Shen C."/>
            <person name="Gill S.R."/>
            <person name="Heidelberg J.F."/>
            <person name="White O."/>
            <person name="Hickey E.K."/>
            <person name="Peterson J.D."/>
            <person name="Utterback T.R."/>
            <person name="Berry K.J."/>
            <person name="Bass S."/>
            <person name="Linher K.D."/>
            <person name="Weidman J.F."/>
            <person name="Khouri H.M."/>
            <person name="Craven B."/>
            <person name="Bowman C."/>
            <person name="Dodson R.J."/>
            <person name="Gwinn M.L."/>
            <person name="Nelson W.C."/>
            <person name="DeBoy R.T."/>
            <person name="Kolonay J.F."/>
            <person name="McClarty G."/>
            <person name="Salzberg S.L."/>
            <person name="Eisen J.A."/>
            <person name="Fraser C.M."/>
        </authorList>
    </citation>
    <scope>NUCLEOTIDE SEQUENCE [LARGE SCALE GENOMIC DNA]</scope>
    <source>
        <strain>AR39</strain>
    </source>
</reference>
<reference key="3">
    <citation type="journal article" date="2000" name="Nucleic Acids Res.">
        <title>Comparison of whole genome sequences of Chlamydia pneumoniae J138 from Japan and CWL029 from USA.</title>
        <authorList>
            <person name="Shirai M."/>
            <person name="Hirakawa H."/>
            <person name="Kimoto M."/>
            <person name="Tabuchi M."/>
            <person name="Kishi F."/>
            <person name="Ouchi K."/>
            <person name="Shiba T."/>
            <person name="Ishii K."/>
            <person name="Hattori M."/>
            <person name="Kuhara S."/>
            <person name="Nakazawa T."/>
        </authorList>
    </citation>
    <scope>NUCLEOTIDE SEQUENCE [LARGE SCALE GENOMIC DNA]</scope>
    <source>
        <strain>J138</strain>
    </source>
</reference>
<reference key="4">
    <citation type="submission" date="2002-05" db="EMBL/GenBank/DDBJ databases">
        <title>The genome sequence of Chlamydia pneumoniae TW183 and comparison with other Chlamydia strains based on whole genome sequence analysis.</title>
        <authorList>
            <person name="Geng M.M."/>
            <person name="Schuhmacher A."/>
            <person name="Muehldorfer I."/>
            <person name="Bensch K.W."/>
            <person name="Schaefer K.P."/>
            <person name="Schneider S."/>
            <person name="Pohl T."/>
            <person name="Essig A."/>
            <person name="Marre R."/>
            <person name="Melchers K."/>
        </authorList>
    </citation>
    <scope>NUCLEOTIDE SEQUENCE [LARGE SCALE GENOMIC DNA]</scope>
    <source>
        <strain>TW-183</strain>
    </source>
</reference>
<protein>
    <recommendedName>
        <fullName evidence="1">Ribosome-binding factor A</fullName>
    </recommendedName>
</protein>
<organism>
    <name type="scientific">Chlamydia pneumoniae</name>
    <name type="common">Chlamydophila pneumoniae</name>
    <dbReference type="NCBI Taxonomy" id="83558"/>
    <lineage>
        <taxon>Bacteria</taxon>
        <taxon>Pseudomonadati</taxon>
        <taxon>Chlamydiota</taxon>
        <taxon>Chlamydiia</taxon>
        <taxon>Chlamydiales</taxon>
        <taxon>Chlamydiaceae</taxon>
        <taxon>Chlamydia/Chlamydophila group</taxon>
        <taxon>Chlamydia</taxon>
    </lineage>
</organism>
<accession>Q9Z8M0</accession>
<accession>Q9JQJ6</accession>
<accession>Q9K268</accession>
<feature type="chain" id="PRO_0000102645" description="Ribosome-binding factor A">
    <location>
        <begin position="1"/>
        <end position="120"/>
    </location>
</feature>
<proteinExistence type="inferred from homology"/>
<sequence length="120" mass="13972">MTENRRIKRVNALLQEAIAKVILKDVKHPKISNLWITVTRVSLSKDLHSARVYVSVMPHENTKEEALEALKVSAGFIAHRASKNVVLKYFPELHFYLDDIFSPQDYIENLLWQIQEKEKS</sequence>
<name>RBFA_CHLPN</name>
<keyword id="KW-0963">Cytoplasm</keyword>
<keyword id="KW-0690">Ribosome biogenesis</keyword>
<evidence type="ECO:0000255" key="1">
    <source>
        <dbReference type="HAMAP-Rule" id="MF_00003"/>
    </source>
</evidence>
<evidence type="ECO:0000305" key="2"/>